<dbReference type="EMBL" id="CP000514">
    <property type="protein sequence ID" value="ABM18223.1"/>
    <property type="molecule type" value="Genomic_DNA"/>
</dbReference>
<dbReference type="RefSeq" id="WP_011784640.1">
    <property type="nucleotide sequence ID" value="NC_008740.1"/>
</dbReference>
<dbReference type="SMR" id="A1TZQ4"/>
<dbReference type="STRING" id="351348.Maqu_1131"/>
<dbReference type="GeneID" id="31821555"/>
<dbReference type="KEGG" id="maq:Maqu_1131"/>
<dbReference type="eggNOG" id="COG1160">
    <property type="taxonomic scope" value="Bacteria"/>
</dbReference>
<dbReference type="HOGENOM" id="CLU_016077_6_2_6"/>
<dbReference type="OrthoDB" id="9805918at2"/>
<dbReference type="Proteomes" id="UP000000998">
    <property type="component" value="Chromosome"/>
</dbReference>
<dbReference type="GO" id="GO:0016887">
    <property type="term" value="F:ATP hydrolysis activity"/>
    <property type="evidence" value="ECO:0007669"/>
    <property type="project" value="InterPro"/>
</dbReference>
<dbReference type="GO" id="GO:0005525">
    <property type="term" value="F:GTP binding"/>
    <property type="evidence" value="ECO:0007669"/>
    <property type="project" value="UniProtKB-UniRule"/>
</dbReference>
<dbReference type="GO" id="GO:0043022">
    <property type="term" value="F:ribosome binding"/>
    <property type="evidence" value="ECO:0007669"/>
    <property type="project" value="TreeGrafter"/>
</dbReference>
<dbReference type="GO" id="GO:0042254">
    <property type="term" value="P:ribosome biogenesis"/>
    <property type="evidence" value="ECO:0007669"/>
    <property type="project" value="UniProtKB-KW"/>
</dbReference>
<dbReference type="CDD" id="cd01894">
    <property type="entry name" value="EngA1"/>
    <property type="match status" value="1"/>
</dbReference>
<dbReference type="CDD" id="cd01895">
    <property type="entry name" value="EngA2"/>
    <property type="match status" value="1"/>
</dbReference>
<dbReference type="FunFam" id="3.30.300.20:FF:000004">
    <property type="entry name" value="GTPase Der"/>
    <property type="match status" value="1"/>
</dbReference>
<dbReference type="FunFam" id="3.40.50.300:FF:000040">
    <property type="entry name" value="GTPase Der"/>
    <property type="match status" value="1"/>
</dbReference>
<dbReference type="FunFam" id="3.40.50.300:FF:000057">
    <property type="entry name" value="GTPase Der"/>
    <property type="match status" value="1"/>
</dbReference>
<dbReference type="Gene3D" id="3.30.300.20">
    <property type="match status" value="1"/>
</dbReference>
<dbReference type="Gene3D" id="3.40.50.300">
    <property type="entry name" value="P-loop containing nucleotide triphosphate hydrolases"/>
    <property type="match status" value="2"/>
</dbReference>
<dbReference type="HAMAP" id="MF_00195">
    <property type="entry name" value="GTPase_Der"/>
    <property type="match status" value="1"/>
</dbReference>
<dbReference type="InterPro" id="IPR003593">
    <property type="entry name" value="AAA+_ATPase"/>
</dbReference>
<dbReference type="InterPro" id="IPR031166">
    <property type="entry name" value="G_ENGA"/>
</dbReference>
<dbReference type="InterPro" id="IPR006073">
    <property type="entry name" value="GTP-bd"/>
</dbReference>
<dbReference type="InterPro" id="IPR016484">
    <property type="entry name" value="GTPase_Der"/>
</dbReference>
<dbReference type="InterPro" id="IPR032859">
    <property type="entry name" value="KH_dom-like"/>
</dbReference>
<dbReference type="InterPro" id="IPR015946">
    <property type="entry name" value="KH_dom-like_a/b"/>
</dbReference>
<dbReference type="InterPro" id="IPR027417">
    <property type="entry name" value="P-loop_NTPase"/>
</dbReference>
<dbReference type="InterPro" id="IPR005225">
    <property type="entry name" value="Small_GTP-bd"/>
</dbReference>
<dbReference type="NCBIfam" id="TIGR03594">
    <property type="entry name" value="GTPase_EngA"/>
    <property type="match status" value="1"/>
</dbReference>
<dbReference type="NCBIfam" id="TIGR00231">
    <property type="entry name" value="small_GTP"/>
    <property type="match status" value="2"/>
</dbReference>
<dbReference type="PANTHER" id="PTHR43834">
    <property type="entry name" value="GTPASE DER"/>
    <property type="match status" value="1"/>
</dbReference>
<dbReference type="PANTHER" id="PTHR43834:SF6">
    <property type="entry name" value="GTPASE DER"/>
    <property type="match status" value="1"/>
</dbReference>
<dbReference type="Pfam" id="PF14714">
    <property type="entry name" value="KH_dom-like"/>
    <property type="match status" value="1"/>
</dbReference>
<dbReference type="Pfam" id="PF01926">
    <property type="entry name" value="MMR_HSR1"/>
    <property type="match status" value="2"/>
</dbReference>
<dbReference type="PIRSF" id="PIRSF006485">
    <property type="entry name" value="GTP-binding_EngA"/>
    <property type="match status" value="1"/>
</dbReference>
<dbReference type="PRINTS" id="PR00326">
    <property type="entry name" value="GTP1OBG"/>
</dbReference>
<dbReference type="SMART" id="SM00382">
    <property type="entry name" value="AAA"/>
    <property type="match status" value="2"/>
</dbReference>
<dbReference type="SUPFAM" id="SSF52540">
    <property type="entry name" value="P-loop containing nucleoside triphosphate hydrolases"/>
    <property type="match status" value="2"/>
</dbReference>
<dbReference type="PROSITE" id="PS51712">
    <property type="entry name" value="G_ENGA"/>
    <property type="match status" value="2"/>
</dbReference>
<sequence length="473" mass="52747">MTPVIALVGRPNVGKSTLFNQMTRSRDALVADFPGLTRDRKYGEGNYEGQKFIVIDTGGLTGDEAGIDAEMARQSMQAVEEADIVLFLVDGRAGLTAGDEMIADYLRKSGKQAHLVVNKTDGQDPDVAAADFYSLGFESTFLIAAAHNRGILSLLEALLPEPENPEDQDRADRYPGIRIGVVGRPNVGKSTLVNRMLGEDRVVVYDMPGTTRDSVYIPYERQGHEYTLIDTAGVRRRKNVREAVEKFSIIKTLQAIDDAHVVILVIDAREGLVDQDLHLIGFVLDAGRSLVIAINKWDGMDPEDRDRVKEQVARRLDFLDYADKYYISALHGTGVGTMYESVQACYESAMSKWPTNRLTAILQDAVAQHQPPMVHGRRIKLRYAHQGGSNPPVVVVHGNQVDSLPGAYKRYLENTFRKVLKVVGAPIRFEFKSGENPFATKVDRLTPRQKVKKDNDLKKGRRIKKTRQKSVKR</sequence>
<name>DER_MARN8</name>
<comment type="function">
    <text evidence="1">GTPase that plays an essential role in the late steps of ribosome biogenesis.</text>
</comment>
<comment type="subunit">
    <text evidence="1">Associates with the 50S ribosomal subunit.</text>
</comment>
<comment type="similarity">
    <text evidence="1">Belongs to the TRAFAC class TrmE-Era-EngA-EngB-Septin-like GTPase superfamily. EngA (Der) GTPase family.</text>
</comment>
<keyword id="KW-0342">GTP-binding</keyword>
<keyword id="KW-0547">Nucleotide-binding</keyword>
<keyword id="KW-0677">Repeat</keyword>
<keyword id="KW-0690">Ribosome biogenesis</keyword>
<gene>
    <name evidence="1" type="primary">der</name>
    <name type="synonym">engA</name>
    <name type="ordered locus">Maqu_1131</name>
</gene>
<protein>
    <recommendedName>
        <fullName evidence="1">GTPase Der</fullName>
    </recommendedName>
    <alternativeName>
        <fullName evidence="1">GTP-binding protein EngA</fullName>
    </alternativeName>
</protein>
<feature type="chain" id="PRO_1000011661" description="GTPase Der">
    <location>
        <begin position="1"/>
        <end position="473"/>
    </location>
</feature>
<feature type="domain" description="EngA-type G 1">
    <location>
        <begin position="3"/>
        <end position="166"/>
    </location>
</feature>
<feature type="domain" description="EngA-type G 2">
    <location>
        <begin position="177"/>
        <end position="350"/>
    </location>
</feature>
<feature type="domain" description="KH-like" evidence="1">
    <location>
        <begin position="351"/>
        <end position="435"/>
    </location>
</feature>
<feature type="region of interest" description="Disordered" evidence="2">
    <location>
        <begin position="444"/>
        <end position="473"/>
    </location>
</feature>
<feature type="compositionally biased region" description="Basic and acidic residues" evidence="2">
    <location>
        <begin position="444"/>
        <end position="458"/>
    </location>
</feature>
<feature type="compositionally biased region" description="Basic residues" evidence="2">
    <location>
        <begin position="459"/>
        <end position="473"/>
    </location>
</feature>
<feature type="binding site" evidence="1">
    <location>
        <begin position="9"/>
        <end position="16"/>
    </location>
    <ligand>
        <name>GTP</name>
        <dbReference type="ChEBI" id="CHEBI:37565"/>
        <label>1</label>
    </ligand>
</feature>
<feature type="binding site" evidence="1">
    <location>
        <begin position="56"/>
        <end position="60"/>
    </location>
    <ligand>
        <name>GTP</name>
        <dbReference type="ChEBI" id="CHEBI:37565"/>
        <label>1</label>
    </ligand>
</feature>
<feature type="binding site" evidence="1">
    <location>
        <begin position="118"/>
        <end position="121"/>
    </location>
    <ligand>
        <name>GTP</name>
        <dbReference type="ChEBI" id="CHEBI:37565"/>
        <label>1</label>
    </ligand>
</feature>
<feature type="binding site" evidence="1">
    <location>
        <begin position="183"/>
        <end position="190"/>
    </location>
    <ligand>
        <name>GTP</name>
        <dbReference type="ChEBI" id="CHEBI:37565"/>
        <label>2</label>
    </ligand>
</feature>
<feature type="binding site" evidence="1">
    <location>
        <begin position="230"/>
        <end position="234"/>
    </location>
    <ligand>
        <name>GTP</name>
        <dbReference type="ChEBI" id="CHEBI:37565"/>
        <label>2</label>
    </ligand>
</feature>
<feature type="binding site" evidence="1">
    <location>
        <begin position="295"/>
        <end position="298"/>
    </location>
    <ligand>
        <name>GTP</name>
        <dbReference type="ChEBI" id="CHEBI:37565"/>
        <label>2</label>
    </ligand>
</feature>
<accession>A1TZQ4</accession>
<proteinExistence type="inferred from homology"/>
<reference key="1">
    <citation type="journal article" date="2011" name="Appl. Environ. Microbiol.">
        <title>Genomic potential of Marinobacter aquaeolei, a biogeochemical 'opportunitroph'.</title>
        <authorList>
            <person name="Singer E."/>
            <person name="Webb E.A."/>
            <person name="Nelson W.C."/>
            <person name="Heidelberg J.F."/>
            <person name="Ivanova N."/>
            <person name="Pati A."/>
            <person name="Edwards K.J."/>
        </authorList>
    </citation>
    <scope>NUCLEOTIDE SEQUENCE [LARGE SCALE GENOMIC DNA]</scope>
    <source>
        <strain>ATCC 700491 / DSM 11845 / VT8</strain>
    </source>
</reference>
<evidence type="ECO:0000255" key="1">
    <source>
        <dbReference type="HAMAP-Rule" id="MF_00195"/>
    </source>
</evidence>
<evidence type="ECO:0000256" key="2">
    <source>
        <dbReference type="SAM" id="MobiDB-lite"/>
    </source>
</evidence>
<organism>
    <name type="scientific">Marinobacter nauticus (strain ATCC 700491 / DSM 11845 / VT8)</name>
    <name type="common">Marinobacter aquaeolei</name>
    <dbReference type="NCBI Taxonomy" id="351348"/>
    <lineage>
        <taxon>Bacteria</taxon>
        <taxon>Pseudomonadati</taxon>
        <taxon>Pseudomonadota</taxon>
        <taxon>Gammaproteobacteria</taxon>
        <taxon>Pseudomonadales</taxon>
        <taxon>Marinobacteraceae</taxon>
        <taxon>Marinobacter</taxon>
    </lineage>
</organism>